<reference key="1">
    <citation type="journal article" date="2000" name="Nature">
        <title>The genome sequence of the plant pathogen Xylella fastidiosa.</title>
        <authorList>
            <person name="Simpson A.J.G."/>
            <person name="Reinach F.C."/>
            <person name="Arruda P."/>
            <person name="Abreu F.A."/>
            <person name="Acencio M."/>
            <person name="Alvarenga R."/>
            <person name="Alves L.M.C."/>
            <person name="Araya J.E."/>
            <person name="Baia G.S."/>
            <person name="Baptista C.S."/>
            <person name="Barros M.H."/>
            <person name="Bonaccorsi E.D."/>
            <person name="Bordin S."/>
            <person name="Bove J.M."/>
            <person name="Briones M.R.S."/>
            <person name="Bueno M.R.P."/>
            <person name="Camargo A.A."/>
            <person name="Camargo L.E.A."/>
            <person name="Carraro D.M."/>
            <person name="Carrer H."/>
            <person name="Colauto N.B."/>
            <person name="Colombo C."/>
            <person name="Costa F.F."/>
            <person name="Costa M.C.R."/>
            <person name="Costa-Neto C.M."/>
            <person name="Coutinho L.L."/>
            <person name="Cristofani M."/>
            <person name="Dias-Neto E."/>
            <person name="Docena C."/>
            <person name="El-Dorry H."/>
            <person name="Facincani A.P."/>
            <person name="Ferreira A.J.S."/>
            <person name="Ferreira V.C.A."/>
            <person name="Ferro J.A."/>
            <person name="Fraga J.S."/>
            <person name="Franca S.C."/>
            <person name="Franco M.C."/>
            <person name="Frohme M."/>
            <person name="Furlan L.R."/>
            <person name="Garnier M."/>
            <person name="Goldman G.H."/>
            <person name="Goldman M.H.S."/>
            <person name="Gomes S.L."/>
            <person name="Gruber A."/>
            <person name="Ho P.L."/>
            <person name="Hoheisel J.D."/>
            <person name="Junqueira M.L."/>
            <person name="Kemper E.L."/>
            <person name="Kitajima J.P."/>
            <person name="Krieger J.E."/>
            <person name="Kuramae E.E."/>
            <person name="Laigret F."/>
            <person name="Lambais M.R."/>
            <person name="Leite L.C.C."/>
            <person name="Lemos E.G.M."/>
            <person name="Lemos M.V.F."/>
            <person name="Lopes S.A."/>
            <person name="Lopes C.R."/>
            <person name="Machado J.A."/>
            <person name="Machado M.A."/>
            <person name="Madeira A.M.B.N."/>
            <person name="Madeira H.M.F."/>
            <person name="Marino C.L."/>
            <person name="Marques M.V."/>
            <person name="Martins E.A.L."/>
            <person name="Martins E.M.F."/>
            <person name="Matsukuma A.Y."/>
            <person name="Menck C.F.M."/>
            <person name="Miracca E.C."/>
            <person name="Miyaki C.Y."/>
            <person name="Monteiro-Vitorello C.B."/>
            <person name="Moon D.H."/>
            <person name="Nagai M.A."/>
            <person name="Nascimento A.L.T.O."/>
            <person name="Netto L.E.S."/>
            <person name="Nhani A. Jr."/>
            <person name="Nobrega F.G."/>
            <person name="Nunes L.R."/>
            <person name="Oliveira M.A."/>
            <person name="de Oliveira M.C."/>
            <person name="de Oliveira R.C."/>
            <person name="Palmieri D.A."/>
            <person name="Paris A."/>
            <person name="Peixoto B.R."/>
            <person name="Pereira G.A.G."/>
            <person name="Pereira H.A. Jr."/>
            <person name="Pesquero J.B."/>
            <person name="Quaggio R.B."/>
            <person name="Roberto P.G."/>
            <person name="Rodrigues V."/>
            <person name="de Rosa A.J.M."/>
            <person name="de Rosa V.E. Jr."/>
            <person name="de Sa R.G."/>
            <person name="Santelli R.V."/>
            <person name="Sawasaki H.E."/>
            <person name="da Silva A.C.R."/>
            <person name="da Silva A.M."/>
            <person name="da Silva F.R."/>
            <person name="Silva W.A. Jr."/>
            <person name="da Silveira J.F."/>
            <person name="Silvestri M.L.Z."/>
            <person name="Siqueira W.J."/>
            <person name="de Souza A.A."/>
            <person name="de Souza A.P."/>
            <person name="Terenzi M.F."/>
            <person name="Truffi D."/>
            <person name="Tsai S.M."/>
            <person name="Tsuhako M.H."/>
            <person name="Vallada H."/>
            <person name="Van Sluys M.A."/>
            <person name="Verjovski-Almeida S."/>
            <person name="Vettore A.L."/>
            <person name="Zago M.A."/>
            <person name="Zatz M."/>
            <person name="Meidanis J."/>
            <person name="Setubal J.C."/>
        </authorList>
    </citation>
    <scope>NUCLEOTIDE SEQUENCE [LARGE SCALE GENOMIC DNA]</scope>
    <source>
        <strain>9a5c</strain>
    </source>
</reference>
<keyword id="KW-0067">ATP-binding</keyword>
<keyword id="KW-0520">NAD</keyword>
<keyword id="KW-0547">Nucleotide-binding</keyword>
<keyword id="KW-0548">Nucleotidyltransferase</keyword>
<keyword id="KW-0662">Pyridine nucleotide biosynthesis</keyword>
<keyword id="KW-0808">Transferase</keyword>
<comment type="function">
    <text evidence="1">Catalyzes the reversible adenylation of nicotinate mononucleotide (NaMN) to nicotinic acid adenine dinucleotide (NaAD).</text>
</comment>
<comment type="catalytic activity">
    <reaction>
        <text>nicotinate beta-D-ribonucleotide + ATP + H(+) = deamido-NAD(+) + diphosphate</text>
        <dbReference type="Rhea" id="RHEA:22860"/>
        <dbReference type="ChEBI" id="CHEBI:15378"/>
        <dbReference type="ChEBI" id="CHEBI:30616"/>
        <dbReference type="ChEBI" id="CHEBI:33019"/>
        <dbReference type="ChEBI" id="CHEBI:57502"/>
        <dbReference type="ChEBI" id="CHEBI:58437"/>
        <dbReference type="EC" id="2.7.7.18"/>
    </reaction>
</comment>
<comment type="pathway">
    <text>Cofactor biosynthesis; NAD(+) biosynthesis; deamido-NAD(+) from nicotinate D-ribonucleotide: step 1/1.</text>
</comment>
<comment type="similarity">
    <text evidence="2">Belongs to the NadD family.</text>
</comment>
<protein>
    <recommendedName>
        <fullName>Probable nicotinate-nucleotide adenylyltransferase</fullName>
        <ecNumber>2.7.7.18</ecNumber>
    </recommendedName>
    <alternativeName>
        <fullName>Deamido-NAD(+) diphosphorylase</fullName>
    </alternativeName>
    <alternativeName>
        <fullName>Deamido-NAD(+) pyrophosphorylase</fullName>
    </alternativeName>
    <alternativeName>
        <fullName>Nicotinate mononucleotide adenylyltransferase</fullName>
        <shortName>NaMN adenylyltransferase</shortName>
    </alternativeName>
</protein>
<dbReference type="EC" id="2.7.7.18"/>
<dbReference type="EMBL" id="AE003849">
    <property type="protein sequence ID" value="AAF84978.1"/>
    <property type="molecule type" value="Genomic_DNA"/>
</dbReference>
<dbReference type="PIR" id="H82590">
    <property type="entry name" value="H82590"/>
</dbReference>
<dbReference type="RefSeq" id="WP_010894627.1">
    <property type="nucleotide sequence ID" value="NC_002488.3"/>
</dbReference>
<dbReference type="SMR" id="Q9PBG5"/>
<dbReference type="STRING" id="160492.XF_2179"/>
<dbReference type="KEGG" id="xfa:XF_2179"/>
<dbReference type="eggNOG" id="COG1057">
    <property type="taxonomic scope" value="Bacteria"/>
</dbReference>
<dbReference type="HOGENOM" id="CLU_069765_0_0_6"/>
<dbReference type="UniPathway" id="UPA00253">
    <property type="reaction ID" value="UER00332"/>
</dbReference>
<dbReference type="Proteomes" id="UP000000812">
    <property type="component" value="Chromosome"/>
</dbReference>
<dbReference type="GO" id="GO:0005524">
    <property type="term" value="F:ATP binding"/>
    <property type="evidence" value="ECO:0007669"/>
    <property type="project" value="UniProtKB-KW"/>
</dbReference>
<dbReference type="GO" id="GO:0004515">
    <property type="term" value="F:nicotinate-nucleotide adenylyltransferase activity"/>
    <property type="evidence" value="ECO:0007669"/>
    <property type="project" value="UniProtKB-UniRule"/>
</dbReference>
<dbReference type="GO" id="GO:0009435">
    <property type="term" value="P:NAD biosynthetic process"/>
    <property type="evidence" value="ECO:0007669"/>
    <property type="project" value="UniProtKB-UniRule"/>
</dbReference>
<dbReference type="CDD" id="cd02165">
    <property type="entry name" value="NMNAT"/>
    <property type="match status" value="1"/>
</dbReference>
<dbReference type="Gene3D" id="3.40.50.620">
    <property type="entry name" value="HUPs"/>
    <property type="match status" value="1"/>
</dbReference>
<dbReference type="HAMAP" id="MF_00244">
    <property type="entry name" value="NaMN_adenylyltr"/>
    <property type="match status" value="1"/>
</dbReference>
<dbReference type="InterPro" id="IPR004821">
    <property type="entry name" value="Cyt_trans-like"/>
</dbReference>
<dbReference type="InterPro" id="IPR005248">
    <property type="entry name" value="NadD/NMNAT"/>
</dbReference>
<dbReference type="InterPro" id="IPR014729">
    <property type="entry name" value="Rossmann-like_a/b/a_fold"/>
</dbReference>
<dbReference type="NCBIfam" id="TIGR00125">
    <property type="entry name" value="cyt_tran_rel"/>
    <property type="match status" value="1"/>
</dbReference>
<dbReference type="NCBIfam" id="TIGR00482">
    <property type="entry name" value="nicotinate (nicotinamide) nucleotide adenylyltransferase"/>
    <property type="match status" value="1"/>
</dbReference>
<dbReference type="NCBIfam" id="NF000839">
    <property type="entry name" value="PRK00071.1-1"/>
    <property type="match status" value="1"/>
</dbReference>
<dbReference type="PANTHER" id="PTHR39321">
    <property type="entry name" value="NICOTINATE-NUCLEOTIDE ADENYLYLTRANSFERASE-RELATED"/>
    <property type="match status" value="1"/>
</dbReference>
<dbReference type="PANTHER" id="PTHR39321:SF3">
    <property type="entry name" value="PHOSPHOPANTETHEINE ADENYLYLTRANSFERASE"/>
    <property type="match status" value="1"/>
</dbReference>
<dbReference type="Pfam" id="PF01467">
    <property type="entry name" value="CTP_transf_like"/>
    <property type="match status" value="1"/>
</dbReference>
<dbReference type="SUPFAM" id="SSF52374">
    <property type="entry name" value="Nucleotidylyl transferase"/>
    <property type="match status" value="1"/>
</dbReference>
<gene>
    <name type="primary">nadD</name>
    <name type="ordered locus">XF_2179</name>
</gene>
<sequence>MPSLHVFYGGTFDPVHVGHLAIARAAHAALQAPIALIPSADPPHRPTPGSSSMDRLRMLQLAVSKEPGLSADPRELQRAARQNRSSYTVDTLTEVRSELGPKTSIIWLLGADAFVNLSNWKDWQMLPALTHLVIANRPGITLQTQLPPKMATVFNHRWVQDPATLRNTPHGHLWLLNQPPNPSSASKVRAAISAAAHWEADLTPEVAQYIRTHRLYGIHDIN</sequence>
<name>NADD_XYLFA</name>
<feature type="chain" id="PRO_0000181466" description="Probable nicotinate-nucleotide adenylyltransferase">
    <location>
        <begin position="1"/>
        <end position="222"/>
    </location>
</feature>
<accession>Q9PBG5</accession>
<proteinExistence type="inferred from homology"/>
<evidence type="ECO:0000250" key="1"/>
<evidence type="ECO:0000305" key="2"/>
<organism>
    <name type="scientific">Xylella fastidiosa (strain 9a5c)</name>
    <dbReference type="NCBI Taxonomy" id="160492"/>
    <lineage>
        <taxon>Bacteria</taxon>
        <taxon>Pseudomonadati</taxon>
        <taxon>Pseudomonadota</taxon>
        <taxon>Gammaproteobacteria</taxon>
        <taxon>Lysobacterales</taxon>
        <taxon>Lysobacteraceae</taxon>
        <taxon>Xylella</taxon>
    </lineage>
</organism>